<name>TMCAL_GEOSW</name>
<protein>
    <recommendedName>
        <fullName evidence="1">tRNA(Met) cytidine acetate ligase</fullName>
        <ecNumber evidence="1">6.3.4.-</ecNumber>
    </recommendedName>
</protein>
<accession>C5D8K7</accession>
<proteinExistence type="inferred from homology"/>
<evidence type="ECO:0000255" key="1">
    <source>
        <dbReference type="HAMAP-Rule" id="MF_01539"/>
    </source>
</evidence>
<gene>
    <name evidence="1" type="primary">tmcAL</name>
    <name type="ordered locus">GWCH70_1004</name>
</gene>
<sequence>MKAVGIIVEYNPFHNGHLYHLEETKKQTGADCIIAVMSGNFLQRGEPALVSKWARTKMALSAGVDIVIELPYAFAVQSAEQFASGAVTLLHSLFCEEICFGSENGNITAFIDAAKTFLEQKQQHDSYVQEALQEGVSYPRANAEAWKRLNATNLDLSKPNNVLGLAYVKAILQKQIPITPRTIRRIASDYHDKTFSHPSIASATSLRKALKGSLAHLETIAPYIPGTTKQTLEQYYDTYGMFHEWEAYFPFLKYRIMTAEEAELRQIAGVDEGIEHRLKQEIVAAPTFSAFMNSIKTKRYTWTRLQRICTHILTNFTKDQRKKTETPTYIRLLGMSSNGRRYLQHVKKHLPLPLVTKVSNLKHDPIYQQEKKASFAYAAIFPEPARTNVLKEEYATPPLLQ</sequence>
<feature type="chain" id="PRO_1000215426" description="tRNA(Met) cytidine acetate ligase">
    <location>
        <begin position="1"/>
        <end position="401"/>
    </location>
</feature>
<feature type="binding site" evidence="1">
    <location>
        <begin position="7"/>
        <end position="20"/>
    </location>
    <ligand>
        <name>ATP</name>
        <dbReference type="ChEBI" id="CHEBI:30616"/>
    </ligand>
</feature>
<feature type="binding site" evidence="1">
    <location>
        <position position="101"/>
    </location>
    <ligand>
        <name>ATP</name>
        <dbReference type="ChEBI" id="CHEBI:30616"/>
    </ligand>
</feature>
<feature type="binding site" evidence="1">
    <location>
        <position position="160"/>
    </location>
    <ligand>
        <name>ATP</name>
        <dbReference type="ChEBI" id="CHEBI:30616"/>
    </ligand>
</feature>
<feature type="binding site" evidence="1">
    <location>
        <begin position="185"/>
        <end position="186"/>
    </location>
    <ligand>
        <name>ATP</name>
        <dbReference type="ChEBI" id="CHEBI:30616"/>
    </ligand>
</feature>
<reference key="1">
    <citation type="submission" date="2009-06" db="EMBL/GenBank/DDBJ databases">
        <title>Complete sequence of chromosome of Geopacillus sp. WCH70.</title>
        <authorList>
            <consortium name="US DOE Joint Genome Institute"/>
            <person name="Lucas S."/>
            <person name="Copeland A."/>
            <person name="Lapidus A."/>
            <person name="Glavina del Rio T."/>
            <person name="Dalin E."/>
            <person name="Tice H."/>
            <person name="Bruce D."/>
            <person name="Goodwin L."/>
            <person name="Pitluck S."/>
            <person name="Chertkov O."/>
            <person name="Brettin T."/>
            <person name="Detter J.C."/>
            <person name="Han C."/>
            <person name="Larimer F."/>
            <person name="Land M."/>
            <person name="Hauser L."/>
            <person name="Kyrpides N."/>
            <person name="Mikhailova N."/>
            <person name="Brumm P."/>
            <person name="Mead D.A."/>
            <person name="Richardson P."/>
        </authorList>
    </citation>
    <scope>NUCLEOTIDE SEQUENCE [LARGE SCALE GENOMIC DNA]</scope>
    <source>
        <strain>WCH70</strain>
    </source>
</reference>
<comment type="function">
    <text evidence="1">Catalyzes the formation of N(4)-acetylcytidine (ac(4)C) at the wobble position of elongator tRNA(Met), using acetate and ATP as substrates. First activates an acetate ion to form acetyladenylate (Ac-AMP) and then transfers the acetyl group to tRNA to form ac(4)C34.</text>
</comment>
<comment type="catalytic activity">
    <reaction evidence="1">
        <text>cytidine(34) in elongator tRNA(Met) + acetate + ATP = N(4)-acetylcytidine(34) in elongator tRNA(Met) + AMP + diphosphate</text>
        <dbReference type="Rhea" id="RHEA:58144"/>
        <dbReference type="Rhea" id="RHEA-COMP:10693"/>
        <dbReference type="Rhea" id="RHEA-COMP:10694"/>
        <dbReference type="ChEBI" id="CHEBI:30089"/>
        <dbReference type="ChEBI" id="CHEBI:30616"/>
        <dbReference type="ChEBI" id="CHEBI:33019"/>
        <dbReference type="ChEBI" id="CHEBI:74900"/>
        <dbReference type="ChEBI" id="CHEBI:82748"/>
        <dbReference type="ChEBI" id="CHEBI:456215"/>
    </reaction>
</comment>
<comment type="subcellular location">
    <subcellularLocation>
        <location evidence="1">Cytoplasm</location>
    </subcellularLocation>
</comment>
<comment type="similarity">
    <text evidence="1">Belongs to the TmcAL family.</text>
</comment>
<dbReference type="EC" id="6.3.4.-" evidence="1"/>
<dbReference type="EMBL" id="CP001638">
    <property type="protein sequence ID" value="ACS23864.1"/>
    <property type="molecule type" value="Genomic_DNA"/>
</dbReference>
<dbReference type="SMR" id="C5D8K7"/>
<dbReference type="STRING" id="471223.GWCH70_1004"/>
<dbReference type="KEGG" id="gwc:GWCH70_1004"/>
<dbReference type="eggNOG" id="COG1323">
    <property type="taxonomic scope" value="Bacteria"/>
</dbReference>
<dbReference type="HOGENOM" id="CLU_038915_0_2_9"/>
<dbReference type="OrthoDB" id="9769796at2"/>
<dbReference type="GO" id="GO:0005737">
    <property type="term" value="C:cytoplasm"/>
    <property type="evidence" value="ECO:0007669"/>
    <property type="project" value="UniProtKB-SubCell"/>
</dbReference>
<dbReference type="GO" id="GO:0005524">
    <property type="term" value="F:ATP binding"/>
    <property type="evidence" value="ECO:0007669"/>
    <property type="project" value="UniProtKB-KW"/>
</dbReference>
<dbReference type="GO" id="GO:0016879">
    <property type="term" value="F:ligase activity, forming carbon-nitrogen bonds"/>
    <property type="evidence" value="ECO:0007669"/>
    <property type="project" value="UniProtKB-UniRule"/>
</dbReference>
<dbReference type="GO" id="GO:0000049">
    <property type="term" value="F:tRNA binding"/>
    <property type="evidence" value="ECO:0007669"/>
    <property type="project" value="UniProtKB-KW"/>
</dbReference>
<dbReference type="GO" id="GO:0006400">
    <property type="term" value="P:tRNA modification"/>
    <property type="evidence" value="ECO:0007669"/>
    <property type="project" value="UniProtKB-UniRule"/>
</dbReference>
<dbReference type="Gene3D" id="3.40.50.620">
    <property type="entry name" value="HUPs"/>
    <property type="match status" value="1"/>
</dbReference>
<dbReference type="HAMAP" id="MF_01539">
    <property type="entry name" value="TmcAL"/>
    <property type="match status" value="1"/>
</dbReference>
<dbReference type="InterPro" id="IPR014729">
    <property type="entry name" value="Rossmann-like_a/b/a_fold"/>
</dbReference>
<dbReference type="InterPro" id="IPR008513">
    <property type="entry name" value="tRNA(Met)_cyd_acetate_ligase"/>
</dbReference>
<dbReference type="NCBIfam" id="NF010191">
    <property type="entry name" value="PRK13670.1"/>
    <property type="match status" value="1"/>
</dbReference>
<dbReference type="PANTHER" id="PTHR37825">
    <property type="entry name" value="TRNA(MET) CYTIDINE ACETATE LIGASE"/>
    <property type="match status" value="1"/>
</dbReference>
<dbReference type="PANTHER" id="PTHR37825:SF1">
    <property type="entry name" value="TRNA(MET) CYTIDINE ACETATE LIGASE"/>
    <property type="match status" value="1"/>
</dbReference>
<dbReference type="Pfam" id="PF05636">
    <property type="entry name" value="HIGH_NTase1"/>
    <property type="match status" value="1"/>
</dbReference>
<dbReference type="SUPFAM" id="SSF52374">
    <property type="entry name" value="Nucleotidylyl transferase"/>
    <property type="match status" value="1"/>
</dbReference>
<keyword id="KW-0067">ATP-binding</keyword>
<keyword id="KW-0963">Cytoplasm</keyword>
<keyword id="KW-0436">Ligase</keyword>
<keyword id="KW-0547">Nucleotide-binding</keyword>
<keyword id="KW-0694">RNA-binding</keyword>
<keyword id="KW-0819">tRNA processing</keyword>
<keyword id="KW-0820">tRNA-binding</keyword>
<organism>
    <name type="scientific">Geobacillus sp. (strain WCH70)</name>
    <dbReference type="NCBI Taxonomy" id="471223"/>
    <lineage>
        <taxon>Bacteria</taxon>
        <taxon>Bacillati</taxon>
        <taxon>Bacillota</taxon>
        <taxon>Bacilli</taxon>
        <taxon>Bacillales</taxon>
        <taxon>Anoxybacillaceae</taxon>
        <taxon>Geobacillus</taxon>
    </lineage>
</organism>